<comment type="function">
    <text evidence="1">Formation of pseudouridine at positions 38, 39 and 40 in the anticodon stem and loop of transfer RNAs.</text>
</comment>
<comment type="catalytic activity">
    <reaction evidence="1">
        <text>uridine(38/39/40) in tRNA = pseudouridine(38/39/40) in tRNA</text>
        <dbReference type="Rhea" id="RHEA:22376"/>
        <dbReference type="Rhea" id="RHEA-COMP:10085"/>
        <dbReference type="Rhea" id="RHEA-COMP:10087"/>
        <dbReference type="ChEBI" id="CHEBI:65314"/>
        <dbReference type="ChEBI" id="CHEBI:65315"/>
        <dbReference type="EC" id="5.4.99.12"/>
    </reaction>
</comment>
<comment type="subunit">
    <text evidence="1">Homodimer.</text>
</comment>
<comment type="similarity">
    <text evidence="1">Belongs to the tRNA pseudouridine synthase TruA family.</text>
</comment>
<name>TRUA_RHOCS</name>
<sequence>MQRWKLTLEYDGRPFVGWQRQDNGPSVQQALEEAIYRFTQETVTVFCAGRTDAGVHALAMVASVDLAREATADKVQAALNFHLKPHPVAVLRVEPVAPDFHARFSCLGRAYLYRILNRRAPAALEAGRVWHVQGGLDAEAMHEAAQRLVGQHDFSSFRASLCQAKSPVKTLSDLSVARVGEEVRIVARARSFLHHQVRNMVGTLKLVGEGRWTADDVSRALAARNRSAAGPTAPAAGLYFTEAWY</sequence>
<accession>B6IPI0</accession>
<gene>
    <name evidence="1" type="primary">truA</name>
    <name type="ordered locus">RC1_2295</name>
</gene>
<organism>
    <name type="scientific">Rhodospirillum centenum (strain ATCC 51521 / SW)</name>
    <dbReference type="NCBI Taxonomy" id="414684"/>
    <lineage>
        <taxon>Bacteria</taxon>
        <taxon>Pseudomonadati</taxon>
        <taxon>Pseudomonadota</taxon>
        <taxon>Alphaproteobacteria</taxon>
        <taxon>Rhodospirillales</taxon>
        <taxon>Rhodospirillaceae</taxon>
        <taxon>Rhodospirillum</taxon>
    </lineage>
</organism>
<dbReference type="EC" id="5.4.99.12" evidence="1"/>
<dbReference type="EMBL" id="CP000613">
    <property type="protein sequence ID" value="ACI99682.1"/>
    <property type="molecule type" value="Genomic_DNA"/>
</dbReference>
<dbReference type="RefSeq" id="WP_012567467.1">
    <property type="nucleotide sequence ID" value="NC_011420.2"/>
</dbReference>
<dbReference type="SMR" id="B6IPI0"/>
<dbReference type="STRING" id="414684.RC1_2295"/>
<dbReference type="KEGG" id="rce:RC1_2295"/>
<dbReference type="eggNOG" id="COG0101">
    <property type="taxonomic scope" value="Bacteria"/>
</dbReference>
<dbReference type="HOGENOM" id="CLU_014673_0_2_5"/>
<dbReference type="OrthoDB" id="9811823at2"/>
<dbReference type="Proteomes" id="UP000001591">
    <property type="component" value="Chromosome"/>
</dbReference>
<dbReference type="GO" id="GO:0003723">
    <property type="term" value="F:RNA binding"/>
    <property type="evidence" value="ECO:0007669"/>
    <property type="project" value="InterPro"/>
</dbReference>
<dbReference type="GO" id="GO:0160147">
    <property type="term" value="F:tRNA pseudouridine(38-40) synthase activity"/>
    <property type="evidence" value="ECO:0007669"/>
    <property type="project" value="UniProtKB-EC"/>
</dbReference>
<dbReference type="GO" id="GO:0031119">
    <property type="term" value="P:tRNA pseudouridine synthesis"/>
    <property type="evidence" value="ECO:0007669"/>
    <property type="project" value="UniProtKB-UniRule"/>
</dbReference>
<dbReference type="CDD" id="cd02570">
    <property type="entry name" value="PseudoU_synth_EcTruA"/>
    <property type="match status" value="1"/>
</dbReference>
<dbReference type="FunFam" id="3.30.70.580:FF:000001">
    <property type="entry name" value="tRNA pseudouridine synthase A"/>
    <property type="match status" value="1"/>
</dbReference>
<dbReference type="Gene3D" id="3.30.70.660">
    <property type="entry name" value="Pseudouridine synthase I, catalytic domain, C-terminal subdomain"/>
    <property type="match status" value="1"/>
</dbReference>
<dbReference type="Gene3D" id="3.30.70.580">
    <property type="entry name" value="Pseudouridine synthase I, catalytic domain, N-terminal subdomain"/>
    <property type="match status" value="1"/>
</dbReference>
<dbReference type="HAMAP" id="MF_00171">
    <property type="entry name" value="TruA"/>
    <property type="match status" value="1"/>
</dbReference>
<dbReference type="InterPro" id="IPR020103">
    <property type="entry name" value="PsdUridine_synth_cat_dom_sf"/>
</dbReference>
<dbReference type="InterPro" id="IPR001406">
    <property type="entry name" value="PsdUridine_synth_TruA"/>
</dbReference>
<dbReference type="InterPro" id="IPR020097">
    <property type="entry name" value="PsdUridine_synth_TruA_a/b_dom"/>
</dbReference>
<dbReference type="InterPro" id="IPR020095">
    <property type="entry name" value="PsdUridine_synth_TruA_C"/>
</dbReference>
<dbReference type="InterPro" id="IPR020094">
    <property type="entry name" value="TruA/RsuA/RluB/E/F_N"/>
</dbReference>
<dbReference type="NCBIfam" id="TIGR00071">
    <property type="entry name" value="hisT_truA"/>
    <property type="match status" value="1"/>
</dbReference>
<dbReference type="PANTHER" id="PTHR11142">
    <property type="entry name" value="PSEUDOURIDYLATE SYNTHASE"/>
    <property type="match status" value="1"/>
</dbReference>
<dbReference type="PANTHER" id="PTHR11142:SF0">
    <property type="entry name" value="TRNA PSEUDOURIDINE SYNTHASE-LIKE 1"/>
    <property type="match status" value="1"/>
</dbReference>
<dbReference type="Pfam" id="PF01416">
    <property type="entry name" value="PseudoU_synth_1"/>
    <property type="match status" value="2"/>
</dbReference>
<dbReference type="PIRSF" id="PIRSF001430">
    <property type="entry name" value="tRNA_psdUrid_synth"/>
    <property type="match status" value="1"/>
</dbReference>
<dbReference type="SUPFAM" id="SSF55120">
    <property type="entry name" value="Pseudouridine synthase"/>
    <property type="match status" value="1"/>
</dbReference>
<feature type="chain" id="PRO_1000097774" description="tRNA pseudouridine synthase A">
    <location>
        <begin position="1"/>
        <end position="245"/>
    </location>
</feature>
<feature type="active site" description="Nucleophile" evidence="1">
    <location>
        <position position="52"/>
    </location>
</feature>
<feature type="binding site" evidence="1">
    <location>
        <position position="111"/>
    </location>
    <ligand>
        <name>substrate</name>
    </ligand>
</feature>
<evidence type="ECO:0000255" key="1">
    <source>
        <dbReference type="HAMAP-Rule" id="MF_00171"/>
    </source>
</evidence>
<reference key="1">
    <citation type="submission" date="2007-03" db="EMBL/GenBank/DDBJ databases">
        <title>Genome sequence of Rhodospirillum centenum.</title>
        <authorList>
            <person name="Touchman J.W."/>
            <person name="Bauer C."/>
            <person name="Blankenship R.E."/>
        </authorList>
    </citation>
    <scope>NUCLEOTIDE SEQUENCE [LARGE SCALE GENOMIC DNA]</scope>
    <source>
        <strain>ATCC 51521 / SW</strain>
    </source>
</reference>
<keyword id="KW-0413">Isomerase</keyword>
<keyword id="KW-1185">Reference proteome</keyword>
<keyword id="KW-0819">tRNA processing</keyword>
<protein>
    <recommendedName>
        <fullName evidence="1">tRNA pseudouridine synthase A</fullName>
        <ecNumber evidence="1">5.4.99.12</ecNumber>
    </recommendedName>
    <alternativeName>
        <fullName evidence="1">tRNA pseudouridine(38-40) synthase</fullName>
    </alternativeName>
    <alternativeName>
        <fullName evidence="1">tRNA pseudouridylate synthase I</fullName>
    </alternativeName>
    <alternativeName>
        <fullName evidence="1">tRNA-uridine isomerase I</fullName>
    </alternativeName>
</protein>
<proteinExistence type="inferred from homology"/>